<reference key="1">
    <citation type="journal article" date="1992" name="Cell">
        <title>The growth arrest-specific gene, gas1, is involved in growth suppression.</title>
        <authorList>
            <person name="del Sal G."/>
            <person name="Ruaro M.E."/>
            <person name="Philipson L."/>
            <person name="Schneider C."/>
        </authorList>
    </citation>
    <scope>NUCLEOTIDE SEQUENCE [MRNA]</scope>
    <scope>FUNCTION</scope>
</reference>
<reference key="2">
    <citation type="journal article" date="2004" name="Genome Res.">
        <title>The status, quality, and expansion of the NIH full-length cDNA project: the Mammalian Gene Collection (MGC).</title>
        <authorList>
            <consortium name="The MGC Project Team"/>
        </authorList>
    </citation>
    <scope>NUCLEOTIDE SEQUENCE [LARGE SCALE MRNA]</scope>
    <source>
        <strain>C57BL/6J</strain>
        <tissue>Brain</tissue>
    </source>
</reference>
<reference key="3">
    <citation type="journal article" date="2021" name="Nat. Chem. Biol.">
        <title>A proteome-wide map of 20(S)-hydroxycholesterol interactors in cell membranes.</title>
        <authorList>
            <person name="Cheng Y.S."/>
            <person name="Zhang T."/>
            <person name="Ma X."/>
            <person name="Pratuangtham S."/>
            <person name="Zhang G.C."/>
            <person name="Ondrus A.A."/>
            <person name="Mafi A."/>
            <person name="Lomenick B."/>
            <person name="Jones J.J."/>
            <person name="Ondrus A.E."/>
        </authorList>
    </citation>
    <scope>FUNCTION</scope>
</reference>
<sequence>MLAALLGGAGARTGTLPGALLCLMALLQLLCSAPRGSGLAHGRRLICWQALLQCQGEPDCSYAYSQYAEACAPVLAQRGGADAPGPAGAFPASAASSPRWRCPSHCISALIQLNHTRRGPALEDCDCAQDEHCRSTKRAIEPCLPRTSSVGPGAGAGSVMGCTEARRRCDRDSRCNLALSRYLAYCGKLFNGLRCTDECRAVIEDMLAVPKAALLNDCVCDGLERPICESVKENMARLCFGPDASNGPGSSGSDGGLDDYYDEEYDDEQRAGAAGGEQPLDDDDGLARPGGGAAAAGGRGDLPHGPGRRSSSSGSGGHWANRSAWTPFACLLLLLLLLLGSHL</sequence>
<gene>
    <name type="primary">Gas1</name>
    <name type="synonym">Gas-1</name>
</gene>
<accession>Q01721</accession>
<protein>
    <recommendedName>
        <fullName>Growth arrest-specific protein 1</fullName>
        <shortName>GAS-1</shortName>
    </recommendedName>
</protein>
<comment type="function">
    <text evidence="4 5">Specific growth arrest protein involved in growth suppression. Blocks entry to S phase. Prevents cycling of normal and transformed cells. Binds 20(S)-hydroxycholesterol (20(S)-OHC) (PubMed:34799735).</text>
</comment>
<comment type="interaction">
    <interactant intactId="EBI-15729104">
        <id>Q01721</id>
    </interactant>
    <interactant intactId="EBI-15610126">
        <id>Q6AZB0</id>
        <label>Boc</label>
    </interactant>
    <organismsDiffer>false</organismsDiffer>
    <experiments>2</experiments>
</comment>
<comment type="interaction">
    <interactant intactId="EBI-15729104">
        <id>Q01721</id>
    </interactant>
    <interactant intactId="EBI-7017034">
        <id>Q32MD9</id>
        <label>Cdon</label>
    </interactant>
    <organismsDiffer>false</organismsDiffer>
    <experiments>3</experiments>
</comment>
<comment type="interaction">
    <interactant intactId="EBI-15729104">
        <id>Q01721</id>
    </interactant>
    <interactant intactId="EBI-718555">
        <id>Q9BWV1</id>
        <label>BOC</label>
    </interactant>
    <organismsDiffer>true</organismsDiffer>
    <experiments>2</experiments>
</comment>
<comment type="interaction">
    <interactant intactId="EBI-15729104">
        <id>Q01721</id>
    </interactant>
    <interactant intactId="EBI-7016767">
        <id>O35158</id>
        <label>Cdon</label>
    </interactant>
    <organismsDiffer>true</organismsDiffer>
    <experiments>4</experiments>
</comment>
<comment type="subcellular location">
    <subcellularLocation>
        <location evidence="1">Cell membrane</location>
        <topology evidence="1">Lipid-anchor</topology>
        <topology evidence="1">GPI-anchor</topology>
    </subcellularLocation>
</comment>
<comment type="sequence caution" evidence="6">
    <conflict type="erroneous initiation">
        <sequence resource="EMBL-CDS" id="CAA46256"/>
    </conflict>
</comment>
<proteinExistence type="evidence at protein level"/>
<evidence type="ECO:0000250" key="1"/>
<evidence type="ECO:0000255" key="2"/>
<evidence type="ECO:0000256" key="3">
    <source>
        <dbReference type="SAM" id="MobiDB-lite"/>
    </source>
</evidence>
<evidence type="ECO:0000269" key="4">
    <source>
    </source>
</evidence>
<evidence type="ECO:0000269" key="5">
    <source>
    </source>
</evidence>
<evidence type="ECO:0000305" key="6"/>
<feature type="signal peptide" evidence="2">
    <location>
        <begin position="1"/>
        <end position="38"/>
    </location>
</feature>
<feature type="chain" id="PRO_0000021320" description="Growth arrest-specific protein 1">
    <location>
        <begin position="39"/>
        <end position="315"/>
    </location>
</feature>
<feature type="propeptide" id="PRO_0000021321" description="Removed in mature form" evidence="2">
    <location>
        <begin position="316"/>
        <end position="343"/>
    </location>
</feature>
<feature type="region of interest" description="Disordered" evidence="3">
    <location>
        <begin position="268"/>
        <end position="317"/>
    </location>
</feature>
<feature type="compositionally biased region" description="Gly residues" evidence="3">
    <location>
        <begin position="288"/>
        <end position="300"/>
    </location>
</feature>
<feature type="compositionally biased region" description="Low complexity" evidence="3">
    <location>
        <begin position="303"/>
        <end position="313"/>
    </location>
</feature>
<feature type="lipid moiety-binding region" description="GPI-anchor amidated serine" evidence="2">
    <location>
        <position position="315"/>
    </location>
</feature>
<feature type="glycosylation site" description="N-linked (GlcNAc...) asparagine" evidence="2">
    <location>
        <position position="114"/>
    </location>
</feature>
<feature type="glycosylation site" description="N-linked (GlcNAc...) asparagine" evidence="2">
    <location>
        <position position="321"/>
    </location>
</feature>
<organism>
    <name type="scientific">Mus musculus</name>
    <name type="common">Mouse</name>
    <dbReference type="NCBI Taxonomy" id="10090"/>
    <lineage>
        <taxon>Eukaryota</taxon>
        <taxon>Metazoa</taxon>
        <taxon>Chordata</taxon>
        <taxon>Craniata</taxon>
        <taxon>Vertebrata</taxon>
        <taxon>Euteleostomi</taxon>
        <taxon>Mammalia</taxon>
        <taxon>Eutheria</taxon>
        <taxon>Euarchontoglires</taxon>
        <taxon>Glires</taxon>
        <taxon>Rodentia</taxon>
        <taxon>Myomorpha</taxon>
        <taxon>Muroidea</taxon>
        <taxon>Muridae</taxon>
        <taxon>Murinae</taxon>
        <taxon>Mus</taxon>
        <taxon>Mus</taxon>
    </lineage>
</organism>
<dbReference type="EMBL" id="X65128">
    <property type="protein sequence ID" value="CAA46256.1"/>
    <property type="status" value="ALT_INIT"/>
    <property type="molecule type" value="mRNA"/>
</dbReference>
<dbReference type="EMBL" id="BC058628">
    <property type="protein sequence ID" value="AAH58628.1"/>
    <property type="molecule type" value="mRNA"/>
</dbReference>
<dbReference type="PIR" id="S25771">
    <property type="entry name" value="S25771"/>
</dbReference>
<dbReference type="RefSeq" id="NP_032112.1">
    <property type="nucleotide sequence ID" value="NM_008086.2"/>
</dbReference>
<dbReference type="SMR" id="Q01721"/>
<dbReference type="BioGRID" id="199832">
    <property type="interactions" value="1"/>
</dbReference>
<dbReference type="CORUM" id="Q01721"/>
<dbReference type="DIP" id="DIP-59801N"/>
<dbReference type="FunCoup" id="Q01721">
    <property type="interactions" value="736"/>
</dbReference>
<dbReference type="IntAct" id="Q01721">
    <property type="interactions" value="5"/>
</dbReference>
<dbReference type="STRING" id="10090.ENSMUSP00000153311"/>
<dbReference type="GlyCosmos" id="Q01721">
    <property type="glycosylation" value="2 sites, No reported glycans"/>
</dbReference>
<dbReference type="GlyGen" id="Q01721">
    <property type="glycosylation" value="2 sites, 1 N-linked glycan (1 site)"/>
</dbReference>
<dbReference type="iPTMnet" id="Q01721"/>
<dbReference type="PhosphoSitePlus" id="Q01721"/>
<dbReference type="CPTAC" id="non-CPTAC-3465"/>
<dbReference type="jPOST" id="Q01721"/>
<dbReference type="PaxDb" id="10090-ENSMUSP00000064555"/>
<dbReference type="PeptideAtlas" id="Q01721"/>
<dbReference type="ProteomicsDB" id="267561"/>
<dbReference type="Pumba" id="Q01721"/>
<dbReference type="Antibodypedia" id="13350">
    <property type="antibodies" value="241 antibodies from 31 providers"/>
</dbReference>
<dbReference type="DNASU" id="14451"/>
<dbReference type="Ensembl" id="ENSMUST00000065086.6">
    <property type="protein sequence ID" value="ENSMUSP00000064555.6"/>
    <property type="gene ID" value="ENSMUSG00000052957.9"/>
</dbReference>
<dbReference type="GeneID" id="14451"/>
<dbReference type="KEGG" id="mmu:14451"/>
<dbReference type="UCSC" id="uc007qvi.2">
    <property type="organism name" value="mouse"/>
</dbReference>
<dbReference type="AGR" id="MGI:95655"/>
<dbReference type="CTD" id="2619"/>
<dbReference type="MGI" id="MGI:95655">
    <property type="gene designation" value="Gas1"/>
</dbReference>
<dbReference type="VEuPathDB" id="HostDB:ENSMUSG00000052957"/>
<dbReference type="eggNOG" id="ENOG502QSF7">
    <property type="taxonomic scope" value="Eukaryota"/>
</dbReference>
<dbReference type="GeneTree" id="ENSGT00390000001195"/>
<dbReference type="InParanoid" id="Q01721"/>
<dbReference type="OMA" id="AMLQCQE"/>
<dbReference type="OrthoDB" id="5950623at2759"/>
<dbReference type="PhylomeDB" id="Q01721"/>
<dbReference type="TreeFam" id="TF329660"/>
<dbReference type="Reactome" id="R-MMU-5632681">
    <property type="pathway name" value="Ligand-receptor interactions"/>
</dbReference>
<dbReference type="Reactome" id="R-MMU-5635838">
    <property type="pathway name" value="Activation of SMO"/>
</dbReference>
<dbReference type="BioGRID-ORCS" id="14451">
    <property type="hits" value="5 hits in 80 CRISPR screens"/>
</dbReference>
<dbReference type="ChiTaRS" id="Gas1">
    <property type="organism name" value="mouse"/>
</dbReference>
<dbReference type="PRO" id="PR:Q01721"/>
<dbReference type="Proteomes" id="UP000000589">
    <property type="component" value="Chromosome 13"/>
</dbReference>
<dbReference type="RNAct" id="Q01721">
    <property type="molecule type" value="protein"/>
</dbReference>
<dbReference type="Bgee" id="ENSMUSG00000052957">
    <property type="expression patterns" value="Expressed in ciliary body and 308 other cell types or tissues"/>
</dbReference>
<dbReference type="ExpressionAtlas" id="Q01721">
    <property type="expression patterns" value="baseline and differential"/>
</dbReference>
<dbReference type="GO" id="GO:0016020">
    <property type="term" value="C:membrane"/>
    <property type="evidence" value="ECO:0000314"/>
    <property type="project" value="MGI"/>
</dbReference>
<dbReference type="GO" id="GO:0005886">
    <property type="term" value="C:plasma membrane"/>
    <property type="evidence" value="ECO:0000314"/>
    <property type="project" value="UniProtKB"/>
</dbReference>
<dbReference type="GO" id="GO:0098552">
    <property type="term" value="C:side of membrane"/>
    <property type="evidence" value="ECO:0007669"/>
    <property type="project" value="UniProtKB-KW"/>
</dbReference>
<dbReference type="GO" id="GO:0008142">
    <property type="term" value="F:oxysterol binding"/>
    <property type="evidence" value="ECO:0000315"/>
    <property type="project" value="UniProtKB"/>
</dbReference>
<dbReference type="GO" id="GO:0006915">
    <property type="term" value="P:apoptotic process"/>
    <property type="evidence" value="ECO:0000315"/>
    <property type="project" value="MGI"/>
</dbReference>
<dbReference type="GO" id="GO:0007411">
    <property type="term" value="P:axon guidance"/>
    <property type="evidence" value="ECO:0000315"/>
    <property type="project" value="MGI"/>
</dbReference>
<dbReference type="GO" id="GO:0043010">
    <property type="term" value="P:camera-type eye development"/>
    <property type="evidence" value="ECO:0000315"/>
    <property type="project" value="MGI"/>
</dbReference>
<dbReference type="GO" id="GO:0045165">
    <property type="term" value="P:cell fate commitment"/>
    <property type="evidence" value="ECO:0000315"/>
    <property type="project" value="MGI"/>
</dbReference>
<dbReference type="GO" id="GO:0008283">
    <property type="term" value="P:cell population proliferation"/>
    <property type="evidence" value="ECO:0000315"/>
    <property type="project" value="MGI"/>
</dbReference>
<dbReference type="GO" id="GO:0021587">
    <property type="term" value="P:cerebellum morphogenesis"/>
    <property type="evidence" value="ECO:0000315"/>
    <property type="project" value="MGI"/>
</dbReference>
<dbReference type="GO" id="GO:0048589">
    <property type="term" value="P:developmental growth"/>
    <property type="evidence" value="ECO:0000315"/>
    <property type="project" value="MGI"/>
</dbReference>
<dbReference type="GO" id="GO:0021904">
    <property type="term" value="P:dorsal/ventral neural tube patterning"/>
    <property type="evidence" value="ECO:0000315"/>
    <property type="project" value="MGI"/>
</dbReference>
<dbReference type="GO" id="GO:0009953">
    <property type="term" value="P:dorsal/ventral pattern formation"/>
    <property type="evidence" value="ECO:0000315"/>
    <property type="project" value="MGI"/>
</dbReference>
<dbReference type="GO" id="GO:0048701">
    <property type="term" value="P:embryonic cranial skeleton morphogenesis"/>
    <property type="evidence" value="ECO:0000315"/>
    <property type="project" value="MGI"/>
</dbReference>
<dbReference type="GO" id="GO:0042733">
    <property type="term" value="P:embryonic digit morphogenesis"/>
    <property type="evidence" value="ECO:0000315"/>
    <property type="project" value="MGI"/>
</dbReference>
<dbReference type="GO" id="GO:0048598">
    <property type="term" value="P:embryonic morphogenesis"/>
    <property type="evidence" value="ECO:0000315"/>
    <property type="project" value="MGI"/>
</dbReference>
<dbReference type="GO" id="GO:0048706">
    <property type="term" value="P:embryonic skeletal system development"/>
    <property type="evidence" value="ECO:0000315"/>
    <property type="project" value="MGI"/>
</dbReference>
<dbReference type="GO" id="GO:0048592">
    <property type="term" value="P:eye morphogenesis"/>
    <property type="evidence" value="ECO:0000315"/>
    <property type="project" value="MGI"/>
</dbReference>
<dbReference type="GO" id="GO:0042474">
    <property type="term" value="P:middle ear morphogenesis"/>
    <property type="evidence" value="ECO:0000315"/>
    <property type="project" value="MGI"/>
</dbReference>
<dbReference type="GO" id="GO:0043066">
    <property type="term" value="P:negative regulation of apoptotic process"/>
    <property type="evidence" value="ECO:0000314"/>
    <property type="project" value="UniProtKB"/>
</dbReference>
<dbReference type="GO" id="GO:1902807">
    <property type="term" value="P:negative regulation of cell cycle G1/S phase transition"/>
    <property type="evidence" value="ECO:0000303"/>
    <property type="project" value="UniProtKB"/>
</dbReference>
<dbReference type="GO" id="GO:0030308">
    <property type="term" value="P:negative regulation of cell growth"/>
    <property type="evidence" value="ECO:0000314"/>
    <property type="project" value="UniProtKB"/>
</dbReference>
<dbReference type="GO" id="GO:0050680">
    <property type="term" value="P:negative regulation of epithelial cell proliferation"/>
    <property type="evidence" value="ECO:0000315"/>
    <property type="project" value="MGI"/>
</dbReference>
<dbReference type="GO" id="GO:2001240">
    <property type="term" value="P:negative regulation of extrinsic apoptotic signaling pathway in absence of ligand"/>
    <property type="evidence" value="ECO:0000314"/>
    <property type="project" value="MGI"/>
</dbReference>
<dbReference type="GO" id="GO:0045930">
    <property type="term" value="P:negative regulation of mitotic cell cycle"/>
    <property type="evidence" value="ECO:0000250"/>
    <property type="project" value="UniProtKB"/>
</dbReference>
<dbReference type="GO" id="GO:0010955">
    <property type="term" value="P:negative regulation of protein processing"/>
    <property type="evidence" value="ECO:0000250"/>
    <property type="project" value="UniProtKB"/>
</dbReference>
<dbReference type="GO" id="GO:0045879">
    <property type="term" value="P:negative regulation of smoothened signaling pathway"/>
    <property type="evidence" value="ECO:0000314"/>
    <property type="project" value="MGI"/>
</dbReference>
<dbReference type="GO" id="GO:0042476">
    <property type="term" value="P:odontogenesis"/>
    <property type="evidence" value="ECO:0000315"/>
    <property type="project" value="UniProtKB"/>
</dbReference>
<dbReference type="GO" id="GO:0042473">
    <property type="term" value="P:outer ear morphogenesis"/>
    <property type="evidence" value="ECO:0000315"/>
    <property type="project" value="MGI"/>
</dbReference>
<dbReference type="GO" id="GO:0008284">
    <property type="term" value="P:positive regulation of cell population proliferation"/>
    <property type="evidence" value="ECO:0000315"/>
    <property type="project" value="MGI"/>
</dbReference>
<dbReference type="GO" id="GO:0050679">
    <property type="term" value="P:positive regulation of epithelial cell proliferation"/>
    <property type="evidence" value="ECO:0000315"/>
    <property type="project" value="MGI"/>
</dbReference>
<dbReference type="GO" id="GO:0002053">
    <property type="term" value="P:positive regulation of mesenchymal cell proliferation"/>
    <property type="evidence" value="ECO:0000315"/>
    <property type="project" value="MGI"/>
</dbReference>
<dbReference type="GO" id="GO:0045880">
    <property type="term" value="P:positive regulation of smoothened signaling pathway"/>
    <property type="evidence" value="ECO:0000314"/>
    <property type="project" value="MGI"/>
</dbReference>
<dbReference type="GO" id="GO:0012501">
    <property type="term" value="P:programmed cell death"/>
    <property type="evidence" value="ECO:0000314"/>
    <property type="project" value="MGI"/>
</dbReference>
<dbReference type="GO" id="GO:0051726">
    <property type="term" value="P:regulation of cell cycle"/>
    <property type="evidence" value="ECO:0000304"/>
    <property type="project" value="MGI"/>
</dbReference>
<dbReference type="GO" id="GO:0060628">
    <property type="term" value="P:regulation of ER to Golgi vesicle-mediated transport"/>
    <property type="evidence" value="ECO:0000250"/>
    <property type="project" value="UniProtKB"/>
</dbReference>
<dbReference type="GO" id="GO:0008589">
    <property type="term" value="P:regulation of smoothened signaling pathway"/>
    <property type="evidence" value="ECO:0000315"/>
    <property type="project" value="UniProtKB"/>
</dbReference>
<dbReference type="GO" id="GO:0060021">
    <property type="term" value="P:roof of mouth development"/>
    <property type="evidence" value="ECO:0000315"/>
    <property type="project" value="MGI"/>
</dbReference>
<dbReference type="GO" id="GO:0007224">
    <property type="term" value="P:smoothened signaling pathway"/>
    <property type="evidence" value="ECO:0000315"/>
    <property type="project" value="MGI"/>
</dbReference>
<dbReference type="InterPro" id="IPR039596">
    <property type="entry name" value="GAS1"/>
</dbReference>
<dbReference type="InterPro" id="IPR016017">
    <property type="entry name" value="GDNF/GAS1"/>
</dbReference>
<dbReference type="PANTHER" id="PTHR16840">
    <property type="entry name" value="GROWTH ARREST-SPECIFIC PROTEIN 1"/>
    <property type="match status" value="1"/>
</dbReference>
<dbReference type="PANTHER" id="PTHR16840:SF3">
    <property type="entry name" value="GROWTH ARREST-SPECIFIC PROTEIN 1"/>
    <property type="match status" value="1"/>
</dbReference>
<dbReference type="Pfam" id="PF02351">
    <property type="entry name" value="GDNF"/>
    <property type="match status" value="1"/>
</dbReference>
<dbReference type="SMART" id="SM00907">
    <property type="entry name" value="GDNF"/>
    <property type="match status" value="2"/>
</dbReference>
<name>GAS1_MOUSE</name>
<keyword id="KW-0131">Cell cycle</keyword>
<keyword id="KW-1003">Cell membrane</keyword>
<keyword id="KW-0325">Glycoprotein</keyword>
<keyword id="KW-0336">GPI-anchor</keyword>
<keyword id="KW-0338">Growth arrest</keyword>
<keyword id="KW-0449">Lipoprotein</keyword>
<keyword id="KW-0472">Membrane</keyword>
<keyword id="KW-1185">Reference proteome</keyword>
<keyword id="KW-0732">Signal</keyword>